<dbReference type="EMBL" id="CP000243">
    <property type="protein sequence ID" value="ABE06855.1"/>
    <property type="molecule type" value="Genomic_DNA"/>
</dbReference>
<dbReference type="RefSeq" id="WP_000234823.1">
    <property type="nucleotide sequence ID" value="NZ_CP064825.1"/>
</dbReference>
<dbReference type="SMR" id="Q1RCQ9"/>
<dbReference type="GeneID" id="93776245"/>
<dbReference type="KEGG" id="eci:UTI89_C1373"/>
<dbReference type="HOGENOM" id="CLU_017584_9_4_6"/>
<dbReference type="Proteomes" id="UP000001952">
    <property type="component" value="Chromosome"/>
</dbReference>
<dbReference type="GO" id="GO:0005737">
    <property type="term" value="C:cytoplasm"/>
    <property type="evidence" value="ECO:0007669"/>
    <property type="project" value="UniProtKB-SubCell"/>
</dbReference>
<dbReference type="GO" id="GO:0003677">
    <property type="term" value="F:DNA binding"/>
    <property type="evidence" value="ECO:0007669"/>
    <property type="project" value="UniProtKB-KW"/>
</dbReference>
<dbReference type="GO" id="GO:0003700">
    <property type="term" value="F:DNA-binding transcription factor activity"/>
    <property type="evidence" value="ECO:0007669"/>
    <property type="project" value="UniProtKB-UniRule"/>
</dbReference>
<dbReference type="GO" id="GO:0000062">
    <property type="term" value="F:fatty-acyl-CoA binding"/>
    <property type="evidence" value="ECO:0007669"/>
    <property type="project" value="InterPro"/>
</dbReference>
<dbReference type="GO" id="GO:0006631">
    <property type="term" value="P:fatty acid metabolic process"/>
    <property type="evidence" value="ECO:0007669"/>
    <property type="project" value="UniProtKB-KW"/>
</dbReference>
<dbReference type="GO" id="GO:0019217">
    <property type="term" value="P:regulation of fatty acid metabolic process"/>
    <property type="evidence" value="ECO:0007669"/>
    <property type="project" value="UniProtKB-UniRule"/>
</dbReference>
<dbReference type="CDD" id="cd07377">
    <property type="entry name" value="WHTH_GntR"/>
    <property type="match status" value="1"/>
</dbReference>
<dbReference type="FunFam" id="1.10.10.10:FF:000036">
    <property type="entry name" value="Fatty acid metabolism regulator protein"/>
    <property type="match status" value="1"/>
</dbReference>
<dbReference type="FunFam" id="1.20.120.530:FF:000003">
    <property type="entry name" value="Fatty acid metabolism regulator protein"/>
    <property type="match status" value="1"/>
</dbReference>
<dbReference type="Gene3D" id="1.20.120.530">
    <property type="entry name" value="GntR ligand-binding domain-like"/>
    <property type="match status" value="1"/>
</dbReference>
<dbReference type="Gene3D" id="1.10.10.10">
    <property type="entry name" value="Winged helix-like DNA-binding domain superfamily/Winged helix DNA-binding domain"/>
    <property type="match status" value="1"/>
</dbReference>
<dbReference type="HAMAP" id="MF_00696">
    <property type="entry name" value="HTH_FadR"/>
    <property type="match status" value="1"/>
</dbReference>
<dbReference type="InterPro" id="IPR014178">
    <property type="entry name" value="FA-response_TF_FadR"/>
</dbReference>
<dbReference type="InterPro" id="IPR028374">
    <property type="entry name" value="FadR_C"/>
</dbReference>
<dbReference type="InterPro" id="IPR008920">
    <property type="entry name" value="TF_FadR/GntR_C"/>
</dbReference>
<dbReference type="InterPro" id="IPR000524">
    <property type="entry name" value="Tscrpt_reg_HTH_GntR"/>
</dbReference>
<dbReference type="InterPro" id="IPR036388">
    <property type="entry name" value="WH-like_DNA-bd_sf"/>
</dbReference>
<dbReference type="InterPro" id="IPR036390">
    <property type="entry name" value="WH_DNA-bd_sf"/>
</dbReference>
<dbReference type="NCBIfam" id="TIGR02812">
    <property type="entry name" value="fadR_gamma"/>
    <property type="match status" value="1"/>
</dbReference>
<dbReference type="NCBIfam" id="NF003444">
    <property type="entry name" value="PRK04984.1"/>
    <property type="match status" value="1"/>
</dbReference>
<dbReference type="PANTHER" id="PTHR43537:SF52">
    <property type="entry name" value="FATTY ACID METABOLISM REGULATOR PROTEIN"/>
    <property type="match status" value="1"/>
</dbReference>
<dbReference type="PANTHER" id="PTHR43537">
    <property type="entry name" value="TRANSCRIPTIONAL REGULATOR, GNTR FAMILY"/>
    <property type="match status" value="1"/>
</dbReference>
<dbReference type="Pfam" id="PF07840">
    <property type="entry name" value="FadR_C"/>
    <property type="match status" value="1"/>
</dbReference>
<dbReference type="Pfam" id="PF00392">
    <property type="entry name" value="GntR"/>
    <property type="match status" value="1"/>
</dbReference>
<dbReference type="PRINTS" id="PR00035">
    <property type="entry name" value="HTHGNTR"/>
</dbReference>
<dbReference type="SMART" id="SM00345">
    <property type="entry name" value="HTH_GNTR"/>
    <property type="match status" value="1"/>
</dbReference>
<dbReference type="SUPFAM" id="SSF48008">
    <property type="entry name" value="GntR ligand-binding domain-like"/>
    <property type="match status" value="1"/>
</dbReference>
<dbReference type="SUPFAM" id="SSF46785">
    <property type="entry name" value="Winged helix' DNA-binding domain"/>
    <property type="match status" value="1"/>
</dbReference>
<dbReference type="PROSITE" id="PS50949">
    <property type="entry name" value="HTH_GNTR"/>
    <property type="match status" value="1"/>
</dbReference>
<evidence type="ECO:0000255" key="1">
    <source>
        <dbReference type="HAMAP-Rule" id="MF_00696"/>
    </source>
</evidence>
<gene>
    <name evidence="1" type="primary">fadR</name>
    <name type="ordered locus">UTI89_C1373</name>
</gene>
<accession>Q1RCQ9</accession>
<feature type="chain" id="PRO_0000301503" description="Fatty acid metabolism regulator protein">
    <location>
        <begin position="1"/>
        <end position="239"/>
    </location>
</feature>
<feature type="domain" description="HTH gntR-type" evidence="1">
    <location>
        <begin position="6"/>
        <end position="74"/>
    </location>
</feature>
<feature type="DNA-binding region" description="H-T-H motif" evidence="1">
    <location>
        <begin position="34"/>
        <end position="53"/>
    </location>
</feature>
<reference key="1">
    <citation type="journal article" date="2006" name="Proc. Natl. Acad. Sci. U.S.A.">
        <title>Identification of genes subject to positive selection in uropathogenic strains of Escherichia coli: a comparative genomics approach.</title>
        <authorList>
            <person name="Chen S.L."/>
            <person name="Hung C.-S."/>
            <person name="Xu J."/>
            <person name="Reigstad C.S."/>
            <person name="Magrini V."/>
            <person name="Sabo A."/>
            <person name="Blasiar D."/>
            <person name="Bieri T."/>
            <person name="Meyer R.R."/>
            <person name="Ozersky P."/>
            <person name="Armstrong J.R."/>
            <person name="Fulton R.S."/>
            <person name="Latreille J.P."/>
            <person name="Spieth J."/>
            <person name="Hooton T.M."/>
            <person name="Mardis E.R."/>
            <person name="Hultgren S.J."/>
            <person name="Gordon J.I."/>
        </authorList>
    </citation>
    <scope>NUCLEOTIDE SEQUENCE [LARGE SCALE GENOMIC DNA]</scope>
    <source>
        <strain>UTI89 / UPEC</strain>
    </source>
</reference>
<sequence length="239" mass="26969">MVIKAQSPAGFAEEYIIESIWNNRFPPGTILPAERELSELIGVTRTTLREVLQRLARDGWLTIQHGKPTKVNNFWETSGLNILETLARLDHESVPQLIDNLLSVRTNISTIFIRTAFRQHPDKAQEVLATANEVADHADAFAELDYNIFRGLAFASGNPIYGLILNGMKGLYTRIGRHYFANPEARSLALGFYHKLSALCSEGAHDQVYETVRRYGHESGEIWHRMQKNLPGDLAIQGR</sequence>
<name>FADR_ECOUT</name>
<protein>
    <recommendedName>
        <fullName evidence="1">Fatty acid metabolism regulator protein</fullName>
    </recommendedName>
</protein>
<proteinExistence type="inferred from homology"/>
<keyword id="KW-0010">Activator</keyword>
<keyword id="KW-0963">Cytoplasm</keyword>
<keyword id="KW-0238">DNA-binding</keyword>
<keyword id="KW-0276">Fatty acid metabolism</keyword>
<keyword id="KW-0443">Lipid metabolism</keyword>
<keyword id="KW-0678">Repressor</keyword>
<keyword id="KW-0804">Transcription</keyword>
<keyword id="KW-0805">Transcription regulation</keyword>
<comment type="function">
    <text evidence="1">Multifunctional regulator of fatty acid metabolism.</text>
</comment>
<comment type="subunit">
    <text evidence="1">Homodimer.</text>
</comment>
<comment type="subcellular location">
    <subcellularLocation>
        <location evidence="1">Cytoplasm</location>
    </subcellularLocation>
</comment>
<organism>
    <name type="scientific">Escherichia coli (strain UTI89 / UPEC)</name>
    <dbReference type="NCBI Taxonomy" id="364106"/>
    <lineage>
        <taxon>Bacteria</taxon>
        <taxon>Pseudomonadati</taxon>
        <taxon>Pseudomonadota</taxon>
        <taxon>Gammaproteobacteria</taxon>
        <taxon>Enterobacterales</taxon>
        <taxon>Enterobacteriaceae</taxon>
        <taxon>Escherichia</taxon>
    </lineage>
</organism>